<dbReference type="EMBL" id="CP000352">
    <property type="protein sequence ID" value="ABF10176.1"/>
    <property type="molecule type" value="Genomic_DNA"/>
</dbReference>
<dbReference type="RefSeq" id="WP_008642942.1">
    <property type="nucleotide sequence ID" value="NC_007973.1"/>
</dbReference>
<dbReference type="SMR" id="Q1LI50"/>
<dbReference type="STRING" id="266264.Rmet_3304"/>
<dbReference type="GeneID" id="92818446"/>
<dbReference type="KEGG" id="rme:Rmet_3304"/>
<dbReference type="eggNOG" id="COG0199">
    <property type="taxonomic scope" value="Bacteria"/>
</dbReference>
<dbReference type="HOGENOM" id="CLU_139869_0_1_4"/>
<dbReference type="Proteomes" id="UP000002429">
    <property type="component" value="Chromosome"/>
</dbReference>
<dbReference type="GO" id="GO:0005737">
    <property type="term" value="C:cytoplasm"/>
    <property type="evidence" value="ECO:0007669"/>
    <property type="project" value="UniProtKB-ARBA"/>
</dbReference>
<dbReference type="GO" id="GO:0015935">
    <property type="term" value="C:small ribosomal subunit"/>
    <property type="evidence" value="ECO:0007669"/>
    <property type="project" value="TreeGrafter"/>
</dbReference>
<dbReference type="GO" id="GO:0019843">
    <property type="term" value="F:rRNA binding"/>
    <property type="evidence" value="ECO:0007669"/>
    <property type="project" value="UniProtKB-UniRule"/>
</dbReference>
<dbReference type="GO" id="GO:0003735">
    <property type="term" value="F:structural constituent of ribosome"/>
    <property type="evidence" value="ECO:0007669"/>
    <property type="project" value="InterPro"/>
</dbReference>
<dbReference type="GO" id="GO:0006412">
    <property type="term" value="P:translation"/>
    <property type="evidence" value="ECO:0007669"/>
    <property type="project" value="UniProtKB-UniRule"/>
</dbReference>
<dbReference type="FunFam" id="1.10.287.1480:FF:000001">
    <property type="entry name" value="30S ribosomal protein S14"/>
    <property type="match status" value="1"/>
</dbReference>
<dbReference type="Gene3D" id="1.10.287.1480">
    <property type="match status" value="1"/>
</dbReference>
<dbReference type="HAMAP" id="MF_00537">
    <property type="entry name" value="Ribosomal_uS14_1"/>
    <property type="match status" value="1"/>
</dbReference>
<dbReference type="InterPro" id="IPR001209">
    <property type="entry name" value="Ribosomal_uS14"/>
</dbReference>
<dbReference type="InterPro" id="IPR023036">
    <property type="entry name" value="Ribosomal_uS14_bac/plastid"/>
</dbReference>
<dbReference type="NCBIfam" id="NF006477">
    <property type="entry name" value="PRK08881.1"/>
    <property type="match status" value="1"/>
</dbReference>
<dbReference type="PANTHER" id="PTHR19836">
    <property type="entry name" value="30S RIBOSOMAL PROTEIN S14"/>
    <property type="match status" value="1"/>
</dbReference>
<dbReference type="PANTHER" id="PTHR19836:SF19">
    <property type="entry name" value="SMALL RIBOSOMAL SUBUNIT PROTEIN US14M"/>
    <property type="match status" value="1"/>
</dbReference>
<dbReference type="Pfam" id="PF00253">
    <property type="entry name" value="Ribosomal_S14"/>
    <property type="match status" value="1"/>
</dbReference>
<dbReference type="SUPFAM" id="SSF57716">
    <property type="entry name" value="Glucocorticoid receptor-like (DNA-binding domain)"/>
    <property type="match status" value="1"/>
</dbReference>
<comment type="function">
    <text evidence="1">Binds 16S rRNA, required for the assembly of 30S particles and may also be responsible for determining the conformation of the 16S rRNA at the A site.</text>
</comment>
<comment type="subunit">
    <text evidence="1">Part of the 30S ribosomal subunit. Contacts proteins S3 and S10.</text>
</comment>
<comment type="similarity">
    <text evidence="1">Belongs to the universal ribosomal protein uS14 family.</text>
</comment>
<name>RS14_CUPMC</name>
<keyword id="KW-1185">Reference proteome</keyword>
<keyword id="KW-0687">Ribonucleoprotein</keyword>
<keyword id="KW-0689">Ribosomal protein</keyword>
<keyword id="KW-0694">RNA-binding</keyword>
<keyword id="KW-0699">rRNA-binding</keyword>
<organism>
    <name type="scientific">Cupriavidus metallidurans (strain ATCC 43123 / DSM 2839 / NBRC 102507 / CH34)</name>
    <name type="common">Ralstonia metallidurans</name>
    <dbReference type="NCBI Taxonomy" id="266264"/>
    <lineage>
        <taxon>Bacteria</taxon>
        <taxon>Pseudomonadati</taxon>
        <taxon>Pseudomonadota</taxon>
        <taxon>Betaproteobacteria</taxon>
        <taxon>Burkholderiales</taxon>
        <taxon>Burkholderiaceae</taxon>
        <taxon>Cupriavidus</taxon>
    </lineage>
</organism>
<reference key="1">
    <citation type="journal article" date="2010" name="PLoS ONE">
        <title>The complete genome sequence of Cupriavidus metallidurans strain CH34, a master survivalist in harsh and anthropogenic environments.</title>
        <authorList>
            <person name="Janssen P.J."/>
            <person name="Van Houdt R."/>
            <person name="Moors H."/>
            <person name="Monsieurs P."/>
            <person name="Morin N."/>
            <person name="Michaux A."/>
            <person name="Benotmane M.A."/>
            <person name="Leys N."/>
            <person name="Vallaeys T."/>
            <person name="Lapidus A."/>
            <person name="Monchy S."/>
            <person name="Medigue C."/>
            <person name="Taghavi S."/>
            <person name="McCorkle S."/>
            <person name="Dunn J."/>
            <person name="van der Lelie D."/>
            <person name="Mergeay M."/>
        </authorList>
    </citation>
    <scope>NUCLEOTIDE SEQUENCE [LARGE SCALE GENOMIC DNA]</scope>
    <source>
        <strain>ATCC 43123 / DSM 2839 / NBRC 102507 / CH34</strain>
    </source>
</reference>
<feature type="chain" id="PRO_1000128530" description="Small ribosomal subunit protein uS14">
    <location>
        <begin position="1"/>
        <end position="101"/>
    </location>
</feature>
<gene>
    <name evidence="1" type="primary">rpsN</name>
    <name type="ordered locus">Rmet_3304</name>
</gene>
<sequence length="101" mass="11721">MAKLALIEREKKRAKLVAKYADKRANLKAIIDDQEKSEEERYLARLELQKLPRNANPTRQRNRCAITGRPRGTFRKFGLARNKIREIAFKGEIPGLTKASW</sequence>
<evidence type="ECO:0000255" key="1">
    <source>
        <dbReference type="HAMAP-Rule" id="MF_00537"/>
    </source>
</evidence>
<evidence type="ECO:0000305" key="2"/>
<protein>
    <recommendedName>
        <fullName evidence="1">Small ribosomal subunit protein uS14</fullName>
    </recommendedName>
    <alternativeName>
        <fullName evidence="2">30S ribosomal protein S14</fullName>
    </alternativeName>
</protein>
<proteinExistence type="inferred from homology"/>
<accession>Q1LI50</accession>